<feature type="chain" id="PRO_1000096282" description="tRNA-specific 2-thiouridylase MnmA">
    <location>
        <begin position="1"/>
        <end position="377"/>
    </location>
</feature>
<feature type="region of interest" description="Interaction with target base in tRNA" evidence="1">
    <location>
        <begin position="94"/>
        <end position="96"/>
    </location>
</feature>
<feature type="region of interest" description="Interaction with tRNA" evidence="1">
    <location>
        <begin position="151"/>
        <end position="153"/>
    </location>
</feature>
<feature type="region of interest" description="Interaction with tRNA" evidence="1">
    <location>
        <begin position="315"/>
        <end position="316"/>
    </location>
</feature>
<feature type="active site" description="Nucleophile" evidence="1">
    <location>
        <position position="99"/>
    </location>
</feature>
<feature type="active site" description="Cysteine persulfide intermediate" evidence="1">
    <location>
        <position position="201"/>
    </location>
</feature>
<feature type="binding site" evidence="1">
    <location>
        <begin position="8"/>
        <end position="15"/>
    </location>
    <ligand>
        <name>ATP</name>
        <dbReference type="ChEBI" id="CHEBI:30616"/>
    </ligand>
</feature>
<feature type="binding site" evidence="1">
    <location>
        <position position="34"/>
    </location>
    <ligand>
        <name>ATP</name>
        <dbReference type="ChEBI" id="CHEBI:30616"/>
    </ligand>
</feature>
<feature type="binding site" evidence="1">
    <location>
        <position position="123"/>
    </location>
    <ligand>
        <name>ATP</name>
        <dbReference type="ChEBI" id="CHEBI:30616"/>
    </ligand>
</feature>
<feature type="site" description="Interaction with tRNA" evidence="1">
    <location>
        <position position="124"/>
    </location>
</feature>
<feature type="site" description="Interaction with tRNA" evidence="1">
    <location>
        <position position="350"/>
    </location>
</feature>
<feature type="disulfide bond" description="Alternate" evidence="1">
    <location>
        <begin position="99"/>
        <end position="201"/>
    </location>
</feature>
<proteinExistence type="inferred from homology"/>
<dbReference type="EC" id="2.8.1.13" evidence="1"/>
<dbReference type="EMBL" id="CU468230">
    <property type="protein sequence ID" value="CAP00474.1"/>
    <property type="molecule type" value="Genomic_DNA"/>
</dbReference>
<dbReference type="SMR" id="B0VUD6"/>
<dbReference type="KEGG" id="abm:ABSDF1124"/>
<dbReference type="HOGENOM" id="CLU_035188_1_0_6"/>
<dbReference type="Proteomes" id="UP000001741">
    <property type="component" value="Chromosome"/>
</dbReference>
<dbReference type="GO" id="GO:0005737">
    <property type="term" value="C:cytoplasm"/>
    <property type="evidence" value="ECO:0007669"/>
    <property type="project" value="UniProtKB-SubCell"/>
</dbReference>
<dbReference type="GO" id="GO:0005524">
    <property type="term" value="F:ATP binding"/>
    <property type="evidence" value="ECO:0007669"/>
    <property type="project" value="UniProtKB-KW"/>
</dbReference>
<dbReference type="GO" id="GO:0000049">
    <property type="term" value="F:tRNA binding"/>
    <property type="evidence" value="ECO:0007669"/>
    <property type="project" value="UniProtKB-KW"/>
</dbReference>
<dbReference type="GO" id="GO:0103016">
    <property type="term" value="F:tRNA-uridine 2-sulfurtransferase activity"/>
    <property type="evidence" value="ECO:0007669"/>
    <property type="project" value="UniProtKB-EC"/>
</dbReference>
<dbReference type="GO" id="GO:0002143">
    <property type="term" value="P:tRNA wobble position uridine thiolation"/>
    <property type="evidence" value="ECO:0007669"/>
    <property type="project" value="TreeGrafter"/>
</dbReference>
<dbReference type="CDD" id="cd01998">
    <property type="entry name" value="MnmA_TRMU-like"/>
    <property type="match status" value="1"/>
</dbReference>
<dbReference type="FunFam" id="2.30.30.280:FF:000001">
    <property type="entry name" value="tRNA-specific 2-thiouridylase MnmA"/>
    <property type="match status" value="1"/>
</dbReference>
<dbReference type="FunFam" id="2.40.30.10:FF:000023">
    <property type="entry name" value="tRNA-specific 2-thiouridylase MnmA"/>
    <property type="match status" value="1"/>
</dbReference>
<dbReference type="FunFam" id="3.40.50.620:FF:000004">
    <property type="entry name" value="tRNA-specific 2-thiouridylase MnmA"/>
    <property type="match status" value="1"/>
</dbReference>
<dbReference type="Gene3D" id="2.30.30.280">
    <property type="entry name" value="Adenine nucleotide alpha hydrolases-like domains"/>
    <property type="match status" value="1"/>
</dbReference>
<dbReference type="Gene3D" id="3.40.50.620">
    <property type="entry name" value="HUPs"/>
    <property type="match status" value="1"/>
</dbReference>
<dbReference type="Gene3D" id="2.40.30.10">
    <property type="entry name" value="Translation factors"/>
    <property type="match status" value="1"/>
</dbReference>
<dbReference type="HAMAP" id="MF_00144">
    <property type="entry name" value="tRNA_thiouridyl_MnmA"/>
    <property type="match status" value="1"/>
</dbReference>
<dbReference type="InterPro" id="IPR004506">
    <property type="entry name" value="MnmA-like"/>
</dbReference>
<dbReference type="InterPro" id="IPR046885">
    <property type="entry name" value="MnmA-like_C"/>
</dbReference>
<dbReference type="InterPro" id="IPR046884">
    <property type="entry name" value="MnmA-like_central"/>
</dbReference>
<dbReference type="InterPro" id="IPR023382">
    <property type="entry name" value="MnmA-like_central_sf"/>
</dbReference>
<dbReference type="InterPro" id="IPR014729">
    <property type="entry name" value="Rossmann-like_a/b/a_fold"/>
</dbReference>
<dbReference type="NCBIfam" id="NF001138">
    <property type="entry name" value="PRK00143.1"/>
    <property type="match status" value="1"/>
</dbReference>
<dbReference type="NCBIfam" id="TIGR00420">
    <property type="entry name" value="trmU"/>
    <property type="match status" value="1"/>
</dbReference>
<dbReference type="PANTHER" id="PTHR11933:SF5">
    <property type="entry name" value="MITOCHONDRIAL TRNA-SPECIFIC 2-THIOURIDYLASE 1"/>
    <property type="match status" value="1"/>
</dbReference>
<dbReference type="PANTHER" id="PTHR11933">
    <property type="entry name" value="TRNA 5-METHYLAMINOMETHYL-2-THIOURIDYLATE -METHYLTRANSFERASE"/>
    <property type="match status" value="1"/>
</dbReference>
<dbReference type="Pfam" id="PF03054">
    <property type="entry name" value="tRNA_Me_trans"/>
    <property type="match status" value="1"/>
</dbReference>
<dbReference type="Pfam" id="PF20258">
    <property type="entry name" value="tRNA_Me_trans_C"/>
    <property type="match status" value="1"/>
</dbReference>
<dbReference type="Pfam" id="PF20259">
    <property type="entry name" value="tRNA_Me_trans_M"/>
    <property type="match status" value="1"/>
</dbReference>
<dbReference type="SUPFAM" id="SSF52402">
    <property type="entry name" value="Adenine nucleotide alpha hydrolases-like"/>
    <property type="match status" value="1"/>
</dbReference>
<keyword id="KW-0067">ATP-binding</keyword>
<keyword id="KW-0963">Cytoplasm</keyword>
<keyword id="KW-1015">Disulfide bond</keyword>
<keyword id="KW-0547">Nucleotide-binding</keyword>
<keyword id="KW-0694">RNA-binding</keyword>
<keyword id="KW-0808">Transferase</keyword>
<keyword id="KW-0819">tRNA processing</keyword>
<keyword id="KW-0820">tRNA-binding</keyword>
<accession>B0VUD6</accession>
<name>MNMA_ACIBS</name>
<sequence>MQQRVIVGMSGGVDSSVSAALLLQQGYQVEGLFMKNWEEDDGTEYCTAMEDLADAQAVADKIGIKLHTANFAMEYWDRVFEHFLAEYAAGRTPNPDILCNKEIKFRAFLDHAMTLGADFIATGHYARRAETAYNSKGEAYAPLLRGLDNNKDQTYFLHAVHGREINKTLFPVGEIEKPEVRRIAEELDLATAKKKDSTGICFIGERRFNDFLKQYLPAQPGKIVLDNGKEVGEHHGLMYYTLGQRGGIGLGGMKGASEGAWFVLHKDVTNNRLVVGQGHDHPLMQSTQLWSESIDWVAGEQNIPAEGLRCTAKTRYRQPDQACTVFIDENSEHGVRVEFDEPQRAVTPGQSVVFYSDEVCLGGGVIHHTNAPTPNFI</sequence>
<evidence type="ECO:0000255" key="1">
    <source>
        <dbReference type="HAMAP-Rule" id="MF_00144"/>
    </source>
</evidence>
<gene>
    <name evidence="1" type="primary">mnmA</name>
    <name type="ordered locus">ABSDF1124</name>
</gene>
<protein>
    <recommendedName>
        <fullName evidence="1">tRNA-specific 2-thiouridylase MnmA</fullName>
        <ecNumber evidence="1">2.8.1.13</ecNumber>
    </recommendedName>
</protein>
<comment type="function">
    <text evidence="1">Catalyzes the 2-thiolation of uridine at the wobble position (U34) of tRNA, leading to the formation of s(2)U34.</text>
</comment>
<comment type="catalytic activity">
    <reaction evidence="1">
        <text>S-sulfanyl-L-cysteinyl-[protein] + uridine(34) in tRNA + AH2 + ATP = 2-thiouridine(34) in tRNA + L-cysteinyl-[protein] + A + AMP + diphosphate + H(+)</text>
        <dbReference type="Rhea" id="RHEA:47032"/>
        <dbReference type="Rhea" id="RHEA-COMP:10131"/>
        <dbReference type="Rhea" id="RHEA-COMP:11726"/>
        <dbReference type="Rhea" id="RHEA-COMP:11727"/>
        <dbReference type="Rhea" id="RHEA-COMP:11728"/>
        <dbReference type="ChEBI" id="CHEBI:13193"/>
        <dbReference type="ChEBI" id="CHEBI:15378"/>
        <dbReference type="ChEBI" id="CHEBI:17499"/>
        <dbReference type="ChEBI" id="CHEBI:29950"/>
        <dbReference type="ChEBI" id="CHEBI:30616"/>
        <dbReference type="ChEBI" id="CHEBI:33019"/>
        <dbReference type="ChEBI" id="CHEBI:61963"/>
        <dbReference type="ChEBI" id="CHEBI:65315"/>
        <dbReference type="ChEBI" id="CHEBI:87170"/>
        <dbReference type="ChEBI" id="CHEBI:456215"/>
        <dbReference type="EC" id="2.8.1.13"/>
    </reaction>
</comment>
<comment type="subcellular location">
    <subcellularLocation>
        <location evidence="1">Cytoplasm</location>
    </subcellularLocation>
</comment>
<comment type="similarity">
    <text evidence="1">Belongs to the MnmA/TRMU family.</text>
</comment>
<organism>
    <name type="scientific">Acinetobacter baumannii (strain SDF)</name>
    <dbReference type="NCBI Taxonomy" id="509170"/>
    <lineage>
        <taxon>Bacteria</taxon>
        <taxon>Pseudomonadati</taxon>
        <taxon>Pseudomonadota</taxon>
        <taxon>Gammaproteobacteria</taxon>
        <taxon>Moraxellales</taxon>
        <taxon>Moraxellaceae</taxon>
        <taxon>Acinetobacter</taxon>
        <taxon>Acinetobacter calcoaceticus/baumannii complex</taxon>
    </lineage>
</organism>
<reference key="1">
    <citation type="journal article" date="2008" name="PLoS ONE">
        <title>Comparative analysis of Acinetobacters: three genomes for three lifestyles.</title>
        <authorList>
            <person name="Vallenet D."/>
            <person name="Nordmann P."/>
            <person name="Barbe V."/>
            <person name="Poirel L."/>
            <person name="Mangenot S."/>
            <person name="Bataille E."/>
            <person name="Dossat C."/>
            <person name="Gas S."/>
            <person name="Kreimeyer A."/>
            <person name="Lenoble P."/>
            <person name="Oztas S."/>
            <person name="Poulain J."/>
            <person name="Segurens B."/>
            <person name="Robert C."/>
            <person name="Abergel C."/>
            <person name="Claverie J.-M."/>
            <person name="Raoult D."/>
            <person name="Medigue C."/>
            <person name="Weissenbach J."/>
            <person name="Cruveiller S."/>
        </authorList>
    </citation>
    <scope>NUCLEOTIDE SEQUENCE [LARGE SCALE GENOMIC DNA]</scope>
    <source>
        <strain>SDF</strain>
    </source>
</reference>